<dbReference type="EMBL" id="BC040290">
    <property type="status" value="NOT_ANNOTATED_CDS"/>
    <property type="molecule type" value="mRNA"/>
</dbReference>
<dbReference type="SMR" id="Q8IWF7"/>
<dbReference type="IntAct" id="Q8IWF7">
    <property type="interactions" value="11"/>
</dbReference>
<dbReference type="BioMuta" id="HGNC:28656"/>
<dbReference type="AGR" id="HGNC:28656"/>
<dbReference type="GeneCards" id="UBE2DNL"/>
<dbReference type="HGNC" id="HGNC:28656">
    <property type="gene designation" value="UBE2DNL"/>
</dbReference>
<dbReference type="neXtProt" id="NX_Q8IWF7"/>
<dbReference type="InParanoid" id="Q8IWF7"/>
<dbReference type="PAN-GO" id="Q8IWF7">
    <property type="GO annotations" value="5 GO annotations based on evolutionary models"/>
</dbReference>
<dbReference type="PhylomeDB" id="Q8IWF7"/>
<dbReference type="PathwayCommons" id="Q8IWF7"/>
<dbReference type="SignaLink" id="Q8IWF7"/>
<dbReference type="Pharos" id="Q8IWF7">
    <property type="development level" value="Tdark"/>
</dbReference>
<dbReference type="Proteomes" id="UP000005640">
    <property type="component" value="Unplaced"/>
</dbReference>
<dbReference type="RNAct" id="Q8IWF7">
    <property type="molecule type" value="protein"/>
</dbReference>
<dbReference type="Gene3D" id="3.10.110.10">
    <property type="entry name" value="Ubiquitin Conjugating Enzyme"/>
    <property type="match status" value="1"/>
</dbReference>
<dbReference type="InterPro" id="IPR000608">
    <property type="entry name" value="UBQ-conjugat_E2_core"/>
</dbReference>
<dbReference type="InterPro" id="IPR016135">
    <property type="entry name" value="UBQ-conjugating_enzyme/RWD"/>
</dbReference>
<dbReference type="PANTHER" id="PTHR24068">
    <property type="entry name" value="UBIQUITIN-CONJUGATING ENZYME E2"/>
    <property type="match status" value="1"/>
</dbReference>
<dbReference type="Pfam" id="PF00179">
    <property type="entry name" value="UQ_con"/>
    <property type="match status" value="1"/>
</dbReference>
<dbReference type="SUPFAM" id="SSF54495">
    <property type="entry name" value="UBC-like"/>
    <property type="match status" value="1"/>
</dbReference>
<dbReference type="PROSITE" id="PS50127">
    <property type="entry name" value="UBC_2"/>
    <property type="match status" value="1"/>
</dbReference>
<organism>
    <name type="scientific">Homo sapiens</name>
    <name type="common">Human</name>
    <dbReference type="NCBI Taxonomy" id="9606"/>
    <lineage>
        <taxon>Eukaryota</taxon>
        <taxon>Metazoa</taxon>
        <taxon>Chordata</taxon>
        <taxon>Craniata</taxon>
        <taxon>Vertebrata</taxon>
        <taxon>Euteleostomi</taxon>
        <taxon>Mammalia</taxon>
        <taxon>Eutheria</taxon>
        <taxon>Euarchontoglires</taxon>
        <taxon>Primates</taxon>
        <taxon>Haplorrhini</taxon>
        <taxon>Catarrhini</taxon>
        <taxon>Hominidae</taxon>
        <taxon>Homo</taxon>
    </lineage>
</organism>
<name>U2D2L_HUMAN</name>
<reference key="1">
    <citation type="journal article" date="2004" name="Genome Res.">
        <title>The status, quality, and expansion of the NIH full-length cDNA project: the Mammalian Gene Collection (MGC).</title>
        <authorList>
            <consortium name="The MGC Project Team"/>
        </authorList>
    </citation>
    <scope>NUCLEOTIDE SEQUENCE [LARGE SCALE MRNA]</scope>
    <source>
        <tissue>Testis</tissue>
    </source>
</reference>
<proteinExistence type="uncertain"/>
<feature type="chain" id="PRO_0000254089" description="Putative ubiquitin-conjugating enzyme E2 D2-like protein">
    <location>
        <begin position="1"/>
        <end position="75"/>
    </location>
</feature>
<feature type="domain" description="UBC core" evidence="1">
    <location>
        <begin position="1"/>
        <end position="75"/>
    </location>
</feature>
<protein>
    <recommendedName>
        <fullName>Putative ubiquitin-conjugating enzyme E2 D2-like protein</fullName>
    </recommendedName>
    <alternativeName>
        <fullName>Ubiquitin carrier protein D2-like</fullName>
    </alternativeName>
    <alternativeName>
        <fullName>Ubiquitin-conjugating enzyme E2D N-terminal-like</fullName>
    </alternativeName>
    <alternativeName>
        <fullName>Ubiquitin-protein ligase D2-like</fullName>
    </alternativeName>
</protein>
<sequence length="75" mass="8761">MALKLIHKEFLELARDPQPHCSAGPVWDDMLHWQATITRPNDSSYLGGVFFLKFPSDYLFKPPKIKFTNGIYHQR</sequence>
<keyword id="KW-1185">Reference proteome</keyword>
<accession>Q8IWF7</accession>
<comment type="similarity">
    <text evidence="1">Belongs to the ubiquitin-conjugating enzyme family.</text>
</comment>
<comment type="caution">
    <text evidence="2">Could be the product of a pseudogene. Probably inactive as a ubiquitin-conjugating enzyme since it lacks the essential active site cysteine.</text>
</comment>
<gene>
    <name type="primary">UBE2DNL</name>
    <name type="synonym">UBE2D2L</name>
</gene>
<evidence type="ECO:0000255" key="1">
    <source>
        <dbReference type="PROSITE-ProRule" id="PRU00388"/>
    </source>
</evidence>
<evidence type="ECO:0000305" key="2"/>